<evidence type="ECO:0000255" key="1">
    <source>
        <dbReference type="HAMAP-Rule" id="MF_00344"/>
    </source>
</evidence>
<reference key="1">
    <citation type="journal article" date="2002" name="Lancet">
        <title>Genome and virulence determinants of high virulence community-acquired MRSA.</title>
        <authorList>
            <person name="Baba T."/>
            <person name="Takeuchi F."/>
            <person name="Kuroda M."/>
            <person name="Yuzawa H."/>
            <person name="Aoki K."/>
            <person name="Oguchi A."/>
            <person name="Nagai Y."/>
            <person name="Iwama N."/>
            <person name="Asano K."/>
            <person name="Naimi T."/>
            <person name="Kuroda H."/>
            <person name="Cui L."/>
            <person name="Yamamoto K."/>
            <person name="Hiramatsu K."/>
        </authorList>
    </citation>
    <scope>NUCLEOTIDE SEQUENCE [LARGE SCALE GENOMIC DNA]</scope>
    <source>
        <strain>MW2</strain>
    </source>
</reference>
<sequence>MEMAKEQELILVLDFGSQYNQLITRRIREMGVYSELHDHEISIEEIKKMNPKGIILSGGPNSVYEEGSFTIDPEIYNLGIPVLGICYGMQLTTKLLGGKVERANEREYGKAIINAKSDELFAGLPAEQTVWMSHSDKVIEIPEGFEVIADSPSTDYAAIEDKKRRIYGVQFHPEVRHTEYGNDLLNNFVRRVCECKGQWTMENFIEIEIEKIRQRVGDRRVLCAMSGGVDSSVVAVLLHKAIGDQLTCIFVDHGLLRKGEGDMVMEQFGEGFNMNIIRVNAKDRFMNKLKGVSDPEQKRKIIGNEFVYVFDDEASKLKGVDFLAQGTLYTDVIESGTKTAQTIKSHHNVGGLPEDMEFELIEPINTLFKDEVRKLGIELGIPEHLVWRQPFPGPGLGIRVLGEITEDKLEIVRESDAILRQVIREEGLEREIWQYFTVLPNIQSVGVMGDYRTYDHTVGIRAVTSIDGMTSDFARIDWEVLQKISSRIVNEVDHVNRVVYDITSKPPSTIEWE</sequence>
<protein>
    <recommendedName>
        <fullName evidence="1">GMP synthase [glutamine-hydrolyzing]</fullName>
        <ecNumber evidence="1">6.3.5.2</ecNumber>
    </recommendedName>
    <alternativeName>
        <fullName evidence="1">GMP synthetase</fullName>
    </alternativeName>
    <alternativeName>
        <fullName evidence="1">Glutamine amidotransferase</fullName>
    </alternativeName>
</protein>
<proteinExistence type="inferred from homology"/>
<gene>
    <name evidence="1" type="primary">guaA</name>
    <name type="ordered locus">MW0367</name>
</gene>
<dbReference type="EC" id="6.3.5.2" evidence="1"/>
<dbReference type="EMBL" id="BA000033">
    <property type="protein sequence ID" value="BAB94232.1"/>
    <property type="molecule type" value="Genomic_DNA"/>
</dbReference>
<dbReference type="RefSeq" id="WP_000424968.1">
    <property type="nucleotide sequence ID" value="NC_003923.1"/>
</dbReference>
<dbReference type="SMR" id="Q8NY69"/>
<dbReference type="KEGG" id="sam:MW0367"/>
<dbReference type="HOGENOM" id="CLU_014340_0_5_9"/>
<dbReference type="UniPathway" id="UPA00189">
    <property type="reaction ID" value="UER00296"/>
</dbReference>
<dbReference type="GO" id="GO:0005829">
    <property type="term" value="C:cytosol"/>
    <property type="evidence" value="ECO:0007669"/>
    <property type="project" value="TreeGrafter"/>
</dbReference>
<dbReference type="GO" id="GO:0005524">
    <property type="term" value="F:ATP binding"/>
    <property type="evidence" value="ECO:0007669"/>
    <property type="project" value="UniProtKB-UniRule"/>
</dbReference>
<dbReference type="GO" id="GO:0003921">
    <property type="term" value="F:GMP synthase activity"/>
    <property type="evidence" value="ECO:0007669"/>
    <property type="project" value="InterPro"/>
</dbReference>
<dbReference type="CDD" id="cd01742">
    <property type="entry name" value="GATase1_GMP_Synthase"/>
    <property type="match status" value="1"/>
</dbReference>
<dbReference type="CDD" id="cd01997">
    <property type="entry name" value="GMP_synthase_C"/>
    <property type="match status" value="1"/>
</dbReference>
<dbReference type="FunFam" id="3.30.300.10:FF:000002">
    <property type="entry name" value="GMP synthase [glutamine-hydrolyzing]"/>
    <property type="match status" value="1"/>
</dbReference>
<dbReference type="FunFam" id="3.40.50.620:FF:000001">
    <property type="entry name" value="GMP synthase [glutamine-hydrolyzing]"/>
    <property type="match status" value="1"/>
</dbReference>
<dbReference type="FunFam" id="3.40.50.880:FF:000001">
    <property type="entry name" value="GMP synthase [glutamine-hydrolyzing]"/>
    <property type="match status" value="1"/>
</dbReference>
<dbReference type="Gene3D" id="3.30.300.10">
    <property type="match status" value="1"/>
</dbReference>
<dbReference type="Gene3D" id="3.40.50.880">
    <property type="match status" value="1"/>
</dbReference>
<dbReference type="Gene3D" id="3.40.50.620">
    <property type="entry name" value="HUPs"/>
    <property type="match status" value="1"/>
</dbReference>
<dbReference type="HAMAP" id="MF_00344">
    <property type="entry name" value="GMP_synthase"/>
    <property type="match status" value="1"/>
</dbReference>
<dbReference type="InterPro" id="IPR029062">
    <property type="entry name" value="Class_I_gatase-like"/>
</dbReference>
<dbReference type="InterPro" id="IPR017926">
    <property type="entry name" value="GATASE"/>
</dbReference>
<dbReference type="InterPro" id="IPR001674">
    <property type="entry name" value="GMP_synth_C"/>
</dbReference>
<dbReference type="InterPro" id="IPR004739">
    <property type="entry name" value="GMP_synth_GATase"/>
</dbReference>
<dbReference type="InterPro" id="IPR022955">
    <property type="entry name" value="GMP_synthase"/>
</dbReference>
<dbReference type="InterPro" id="IPR025777">
    <property type="entry name" value="GMPS_ATP_PPase_dom"/>
</dbReference>
<dbReference type="InterPro" id="IPR014729">
    <property type="entry name" value="Rossmann-like_a/b/a_fold"/>
</dbReference>
<dbReference type="NCBIfam" id="TIGR00884">
    <property type="entry name" value="guaA_Cterm"/>
    <property type="match status" value="1"/>
</dbReference>
<dbReference type="NCBIfam" id="TIGR00888">
    <property type="entry name" value="guaA_Nterm"/>
    <property type="match status" value="1"/>
</dbReference>
<dbReference type="NCBIfam" id="NF000848">
    <property type="entry name" value="PRK00074.1"/>
    <property type="match status" value="1"/>
</dbReference>
<dbReference type="PANTHER" id="PTHR11922:SF2">
    <property type="entry name" value="GMP SYNTHASE [GLUTAMINE-HYDROLYZING]"/>
    <property type="match status" value="1"/>
</dbReference>
<dbReference type="PANTHER" id="PTHR11922">
    <property type="entry name" value="GMP SYNTHASE-RELATED"/>
    <property type="match status" value="1"/>
</dbReference>
<dbReference type="Pfam" id="PF00117">
    <property type="entry name" value="GATase"/>
    <property type="match status" value="1"/>
</dbReference>
<dbReference type="Pfam" id="PF00958">
    <property type="entry name" value="GMP_synt_C"/>
    <property type="match status" value="1"/>
</dbReference>
<dbReference type="Pfam" id="PF03054">
    <property type="entry name" value="tRNA_Me_trans"/>
    <property type="match status" value="1"/>
</dbReference>
<dbReference type="PRINTS" id="PR00097">
    <property type="entry name" value="ANTSNTHASEII"/>
</dbReference>
<dbReference type="PRINTS" id="PR00099">
    <property type="entry name" value="CPSGATASE"/>
</dbReference>
<dbReference type="PRINTS" id="PR00096">
    <property type="entry name" value="GATASE"/>
</dbReference>
<dbReference type="SUPFAM" id="SSF52402">
    <property type="entry name" value="Adenine nucleotide alpha hydrolases-like"/>
    <property type="match status" value="1"/>
</dbReference>
<dbReference type="SUPFAM" id="SSF52317">
    <property type="entry name" value="Class I glutamine amidotransferase-like"/>
    <property type="match status" value="1"/>
</dbReference>
<dbReference type="SUPFAM" id="SSF54810">
    <property type="entry name" value="GMP synthetase C-terminal dimerisation domain"/>
    <property type="match status" value="1"/>
</dbReference>
<dbReference type="PROSITE" id="PS51273">
    <property type="entry name" value="GATASE_TYPE_1"/>
    <property type="match status" value="1"/>
</dbReference>
<dbReference type="PROSITE" id="PS51553">
    <property type="entry name" value="GMPS_ATP_PPASE"/>
    <property type="match status" value="1"/>
</dbReference>
<feature type="chain" id="PRO_0000140180" description="GMP synthase [glutamine-hydrolyzing]">
    <location>
        <begin position="1"/>
        <end position="513"/>
    </location>
</feature>
<feature type="domain" description="Glutamine amidotransferase type-1" evidence="1">
    <location>
        <begin position="9"/>
        <end position="198"/>
    </location>
</feature>
<feature type="domain" description="GMPS ATP-PPase" evidence="1">
    <location>
        <begin position="199"/>
        <end position="388"/>
    </location>
</feature>
<feature type="active site" description="Nucleophile" evidence="1">
    <location>
        <position position="86"/>
    </location>
</feature>
<feature type="active site" evidence="1">
    <location>
        <position position="172"/>
    </location>
</feature>
<feature type="active site" evidence="1">
    <location>
        <position position="174"/>
    </location>
</feature>
<feature type="binding site" evidence="1">
    <location>
        <begin position="226"/>
        <end position="232"/>
    </location>
    <ligand>
        <name>ATP</name>
        <dbReference type="ChEBI" id="CHEBI:30616"/>
    </ligand>
</feature>
<organism>
    <name type="scientific">Staphylococcus aureus (strain MW2)</name>
    <dbReference type="NCBI Taxonomy" id="196620"/>
    <lineage>
        <taxon>Bacteria</taxon>
        <taxon>Bacillati</taxon>
        <taxon>Bacillota</taxon>
        <taxon>Bacilli</taxon>
        <taxon>Bacillales</taxon>
        <taxon>Staphylococcaceae</taxon>
        <taxon>Staphylococcus</taxon>
    </lineage>
</organism>
<accession>Q8NY69</accession>
<keyword id="KW-0067">ATP-binding</keyword>
<keyword id="KW-0315">Glutamine amidotransferase</keyword>
<keyword id="KW-0332">GMP biosynthesis</keyword>
<keyword id="KW-0436">Ligase</keyword>
<keyword id="KW-0547">Nucleotide-binding</keyword>
<keyword id="KW-0658">Purine biosynthesis</keyword>
<name>GUAA_STAAW</name>
<comment type="function">
    <text evidence="1">Catalyzes the synthesis of GMP from XMP.</text>
</comment>
<comment type="catalytic activity">
    <reaction evidence="1">
        <text>XMP + L-glutamine + ATP + H2O = GMP + L-glutamate + AMP + diphosphate + 2 H(+)</text>
        <dbReference type="Rhea" id="RHEA:11680"/>
        <dbReference type="ChEBI" id="CHEBI:15377"/>
        <dbReference type="ChEBI" id="CHEBI:15378"/>
        <dbReference type="ChEBI" id="CHEBI:29985"/>
        <dbReference type="ChEBI" id="CHEBI:30616"/>
        <dbReference type="ChEBI" id="CHEBI:33019"/>
        <dbReference type="ChEBI" id="CHEBI:57464"/>
        <dbReference type="ChEBI" id="CHEBI:58115"/>
        <dbReference type="ChEBI" id="CHEBI:58359"/>
        <dbReference type="ChEBI" id="CHEBI:456215"/>
        <dbReference type="EC" id="6.3.5.2"/>
    </reaction>
</comment>
<comment type="pathway">
    <text evidence="1">Purine metabolism; GMP biosynthesis; GMP from XMP (L-Gln route): step 1/1.</text>
</comment>
<comment type="subunit">
    <text evidence="1">Homodimer.</text>
</comment>